<proteinExistence type="inferred from homology"/>
<evidence type="ECO:0000255" key="1">
    <source>
        <dbReference type="HAMAP-Rule" id="MF_00272"/>
    </source>
</evidence>
<evidence type="ECO:0000255" key="2">
    <source>
        <dbReference type="PROSITE-ProRule" id="PRU01066"/>
    </source>
</evidence>
<keyword id="KW-0450">Lipoyl</keyword>
<keyword id="KW-1185">Reference proteome</keyword>
<organism>
    <name type="scientific">Bordetella pertussis (strain Tohama I / ATCC BAA-589 / NCTC 13251)</name>
    <dbReference type="NCBI Taxonomy" id="257313"/>
    <lineage>
        <taxon>Bacteria</taxon>
        <taxon>Pseudomonadati</taxon>
        <taxon>Pseudomonadota</taxon>
        <taxon>Betaproteobacteria</taxon>
        <taxon>Burkholderiales</taxon>
        <taxon>Alcaligenaceae</taxon>
        <taxon>Bordetella</taxon>
    </lineage>
</organism>
<sequence>MSLPTDRKYTESHEWVQAEGDVFVVGITDNAQEQLGDLVFVGDVKVGATLKAGETAGVVESVKAASDIYAPVDGEIVAFNDELEANPSLINESAYTAWIFKIKPANAADLDKLLDAAGYQAVAG</sequence>
<dbReference type="EMBL" id="BX640411">
    <property type="protein sequence ID" value="CAE40575.1"/>
    <property type="molecule type" value="Genomic_DNA"/>
</dbReference>
<dbReference type="RefSeq" id="NP_879085.1">
    <property type="nucleotide sequence ID" value="NC_002929.2"/>
</dbReference>
<dbReference type="RefSeq" id="WP_010929676.1">
    <property type="nucleotide sequence ID" value="NZ_CP039022.1"/>
</dbReference>
<dbReference type="SMR" id="Q7W0E4"/>
<dbReference type="STRING" id="257313.BP0196"/>
<dbReference type="PaxDb" id="257313-BP0196"/>
<dbReference type="GeneID" id="93202520"/>
<dbReference type="KEGG" id="bpe:BP0196"/>
<dbReference type="PATRIC" id="fig|257313.5.peg.207"/>
<dbReference type="eggNOG" id="COG0509">
    <property type="taxonomic scope" value="Bacteria"/>
</dbReference>
<dbReference type="HOGENOM" id="CLU_097408_2_1_4"/>
<dbReference type="Proteomes" id="UP000002676">
    <property type="component" value="Chromosome"/>
</dbReference>
<dbReference type="GO" id="GO:0005829">
    <property type="term" value="C:cytosol"/>
    <property type="evidence" value="ECO:0007669"/>
    <property type="project" value="TreeGrafter"/>
</dbReference>
<dbReference type="GO" id="GO:0005960">
    <property type="term" value="C:glycine cleavage complex"/>
    <property type="evidence" value="ECO:0007669"/>
    <property type="project" value="InterPro"/>
</dbReference>
<dbReference type="GO" id="GO:0019464">
    <property type="term" value="P:glycine decarboxylation via glycine cleavage system"/>
    <property type="evidence" value="ECO:0007669"/>
    <property type="project" value="UniProtKB-UniRule"/>
</dbReference>
<dbReference type="CDD" id="cd06848">
    <property type="entry name" value="GCS_H"/>
    <property type="match status" value="1"/>
</dbReference>
<dbReference type="Gene3D" id="2.40.50.100">
    <property type="match status" value="1"/>
</dbReference>
<dbReference type="HAMAP" id="MF_00272">
    <property type="entry name" value="GcvH"/>
    <property type="match status" value="1"/>
</dbReference>
<dbReference type="InterPro" id="IPR003016">
    <property type="entry name" value="2-oxoA_DH_lipoyl-BS"/>
</dbReference>
<dbReference type="InterPro" id="IPR000089">
    <property type="entry name" value="Biotin_lipoyl"/>
</dbReference>
<dbReference type="InterPro" id="IPR002930">
    <property type="entry name" value="GCV_H"/>
</dbReference>
<dbReference type="InterPro" id="IPR033753">
    <property type="entry name" value="GCV_H/Fam206"/>
</dbReference>
<dbReference type="InterPro" id="IPR017453">
    <property type="entry name" value="GCV_H_sub"/>
</dbReference>
<dbReference type="InterPro" id="IPR011053">
    <property type="entry name" value="Single_hybrid_motif"/>
</dbReference>
<dbReference type="NCBIfam" id="TIGR00527">
    <property type="entry name" value="gcvH"/>
    <property type="match status" value="1"/>
</dbReference>
<dbReference type="NCBIfam" id="NF002270">
    <property type="entry name" value="PRK01202.1"/>
    <property type="match status" value="1"/>
</dbReference>
<dbReference type="PANTHER" id="PTHR11715">
    <property type="entry name" value="GLYCINE CLEAVAGE SYSTEM H PROTEIN"/>
    <property type="match status" value="1"/>
</dbReference>
<dbReference type="PANTHER" id="PTHR11715:SF3">
    <property type="entry name" value="GLYCINE CLEAVAGE SYSTEM H PROTEIN-RELATED"/>
    <property type="match status" value="1"/>
</dbReference>
<dbReference type="Pfam" id="PF01597">
    <property type="entry name" value="GCV_H"/>
    <property type="match status" value="1"/>
</dbReference>
<dbReference type="SUPFAM" id="SSF51230">
    <property type="entry name" value="Single hybrid motif"/>
    <property type="match status" value="1"/>
</dbReference>
<dbReference type="PROSITE" id="PS50968">
    <property type="entry name" value="BIOTINYL_LIPOYL"/>
    <property type="match status" value="1"/>
</dbReference>
<dbReference type="PROSITE" id="PS00189">
    <property type="entry name" value="LIPOYL"/>
    <property type="match status" value="1"/>
</dbReference>
<accession>Q7W0E4</accession>
<reference key="1">
    <citation type="journal article" date="2003" name="Nat. Genet.">
        <title>Comparative analysis of the genome sequences of Bordetella pertussis, Bordetella parapertussis and Bordetella bronchiseptica.</title>
        <authorList>
            <person name="Parkhill J."/>
            <person name="Sebaihia M."/>
            <person name="Preston A."/>
            <person name="Murphy L.D."/>
            <person name="Thomson N.R."/>
            <person name="Harris D.E."/>
            <person name="Holden M.T.G."/>
            <person name="Churcher C.M."/>
            <person name="Bentley S.D."/>
            <person name="Mungall K.L."/>
            <person name="Cerdeno-Tarraga A.-M."/>
            <person name="Temple L."/>
            <person name="James K.D."/>
            <person name="Harris B."/>
            <person name="Quail M.A."/>
            <person name="Achtman M."/>
            <person name="Atkin R."/>
            <person name="Baker S."/>
            <person name="Basham D."/>
            <person name="Bason N."/>
            <person name="Cherevach I."/>
            <person name="Chillingworth T."/>
            <person name="Collins M."/>
            <person name="Cronin A."/>
            <person name="Davis P."/>
            <person name="Doggett J."/>
            <person name="Feltwell T."/>
            <person name="Goble A."/>
            <person name="Hamlin N."/>
            <person name="Hauser H."/>
            <person name="Holroyd S."/>
            <person name="Jagels K."/>
            <person name="Leather S."/>
            <person name="Moule S."/>
            <person name="Norberczak H."/>
            <person name="O'Neil S."/>
            <person name="Ormond D."/>
            <person name="Price C."/>
            <person name="Rabbinowitsch E."/>
            <person name="Rutter S."/>
            <person name="Sanders M."/>
            <person name="Saunders D."/>
            <person name="Seeger K."/>
            <person name="Sharp S."/>
            <person name="Simmonds M."/>
            <person name="Skelton J."/>
            <person name="Squares R."/>
            <person name="Squares S."/>
            <person name="Stevens K."/>
            <person name="Unwin L."/>
            <person name="Whitehead S."/>
            <person name="Barrell B.G."/>
            <person name="Maskell D.J."/>
        </authorList>
    </citation>
    <scope>NUCLEOTIDE SEQUENCE [LARGE SCALE GENOMIC DNA]</scope>
    <source>
        <strain>Tohama I / ATCC BAA-589 / NCTC 13251</strain>
    </source>
</reference>
<feature type="chain" id="PRO_0000302358" description="Glycine cleavage system H protein">
    <location>
        <begin position="1"/>
        <end position="124"/>
    </location>
</feature>
<feature type="domain" description="Lipoyl-binding" evidence="2">
    <location>
        <begin position="22"/>
        <end position="103"/>
    </location>
</feature>
<feature type="modified residue" description="N6-lipoyllysine" evidence="1">
    <location>
        <position position="63"/>
    </location>
</feature>
<protein>
    <recommendedName>
        <fullName evidence="1">Glycine cleavage system H protein</fullName>
    </recommendedName>
</protein>
<gene>
    <name evidence="1" type="primary">gcvH</name>
    <name type="ordered locus">BP0196</name>
</gene>
<name>GCSH_BORPE</name>
<comment type="function">
    <text evidence="1">The glycine cleavage system catalyzes the degradation of glycine. The H protein shuttles the methylamine group of glycine from the P protein to the T protein.</text>
</comment>
<comment type="cofactor">
    <cofactor evidence="1">
        <name>(R)-lipoate</name>
        <dbReference type="ChEBI" id="CHEBI:83088"/>
    </cofactor>
    <text evidence="1">Binds 1 lipoyl cofactor covalently.</text>
</comment>
<comment type="subunit">
    <text evidence="1">The glycine cleavage system is composed of four proteins: P, T, L and H.</text>
</comment>
<comment type="similarity">
    <text evidence="1">Belongs to the GcvH family.</text>
</comment>